<keyword id="KW-0030">Aminoacyl-tRNA synthetase</keyword>
<keyword id="KW-0067">ATP-binding</keyword>
<keyword id="KW-0963">Cytoplasm</keyword>
<keyword id="KW-0436">Ligase</keyword>
<keyword id="KW-0547">Nucleotide-binding</keyword>
<keyword id="KW-0648">Protein biosynthesis</keyword>
<keyword id="KW-1185">Reference proteome</keyword>
<proteinExistence type="inferred from homology"/>
<comment type="function">
    <text evidence="1">Catalyzes the attachment of proline to tRNA(Pro) in a two-step reaction: proline is first activated by ATP to form Pro-AMP and then transferred to the acceptor end of tRNA(Pro). As ProRS can inadvertently accommodate and process non-cognate amino acids such as alanine and cysteine, to avoid such errors it has two additional distinct editing activities against alanine. One activity is designated as 'pretransfer' editing and involves the tRNA(Pro)-independent hydrolysis of activated Ala-AMP. The other activity is designated 'posttransfer' editing and involves deacylation of mischarged Ala-tRNA(Pro). The misacylated Cys-tRNA(Pro) is not edited by ProRS.</text>
</comment>
<comment type="catalytic activity">
    <reaction evidence="1">
        <text>tRNA(Pro) + L-proline + ATP = L-prolyl-tRNA(Pro) + AMP + diphosphate</text>
        <dbReference type="Rhea" id="RHEA:14305"/>
        <dbReference type="Rhea" id="RHEA-COMP:9700"/>
        <dbReference type="Rhea" id="RHEA-COMP:9702"/>
        <dbReference type="ChEBI" id="CHEBI:30616"/>
        <dbReference type="ChEBI" id="CHEBI:33019"/>
        <dbReference type="ChEBI" id="CHEBI:60039"/>
        <dbReference type="ChEBI" id="CHEBI:78442"/>
        <dbReference type="ChEBI" id="CHEBI:78532"/>
        <dbReference type="ChEBI" id="CHEBI:456215"/>
        <dbReference type="EC" id="6.1.1.15"/>
    </reaction>
</comment>
<comment type="subunit">
    <text evidence="1">Homodimer.</text>
</comment>
<comment type="subcellular location">
    <subcellularLocation>
        <location evidence="1">Cytoplasm</location>
    </subcellularLocation>
</comment>
<comment type="domain">
    <text evidence="1">Consists of three domains: the N-terminal catalytic domain, the editing domain and the C-terminal anticodon-binding domain.</text>
</comment>
<comment type="similarity">
    <text evidence="1">Belongs to the class-II aminoacyl-tRNA synthetase family. ProS type 1 subfamily.</text>
</comment>
<accession>Q8F148</accession>
<name>SYP_LEPIN</name>
<dbReference type="EC" id="6.1.1.15" evidence="1"/>
<dbReference type="EMBL" id="AE010300">
    <property type="protein sequence ID" value="AAN50488.1"/>
    <property type="molecule type" value="Genomic_DNA"/>
</dbReference>
<dbReference type="RefSeq" id="NP_713470.1">
    <property type="nucleotide sequence ID" value="NC_004342.2"/>
</dbReference>
<dbReference type="RefSeq" id="WP_000647843.1">
    <property type="nucleotide sequence ID" value="NC_004342.2"/>
</dbReference>
<dbReference type="SMR" id="Q8F148"/>
<dbReference type="FunCoup" id="Q8F148">
    <property type="interactions" value="480"/>
</dbReference>
<dbReference type="STRING" id="189518.LA_3290"/>
<dbReference type="PaxDb" id="189518-LA_3290"/>
<dbReference type="EnsemblBacteria" id="AAN50488">
    <property type="protein sequence ID" value="AAN50488"/>
    <property type="gene ID" value="LA_3290"/>
</dbReference>
<dbReference type="KEGG" id="lil:LA_3290"/>
<dbReference type="PATRIC" id="fig|189518.3.peg.3260"/>
<dbReference type="HOGENOM" id="CLU_016739_0_0_12"/>
<dbReference type="InParanoid" id="Q8F148"/>
<dbReference type="OrthoDB" id="9809052at2"/>
<dbReference type="Proteomes" id="UP000001408">
    <property type="component" value="Chromosome I"/>
</dbReference>
<dbReference type="GO" id="GO:0005829">
    <property type="term" value="C:cytosol"/>
    <property type="evidence" value="ECO:0000318"/>
    <property type="project" value="GO_Central"/>
</dbReference>
<dbReference type="GO" id="GO:0002161">
    <property type="term" value="F:aminoacyl-tRNA deacylase activity"/>
    <property type="evidence" value="ECO:0007669"/>
    <property type="project" value="InterPro"/>
</dbReference>
<dbReference type="GO" id="GO:0005524">
    <property type="term" value="F:ATP binding"/>
    <property type="evidence" value="ECO:0007669"/>
    <property type="project" value="UniProtKB-UniRule"/>
</dbReference>
<dbReference type="GO" id="GO:0004827">
    <property type="term" value="F:proline-tRNA ligase activity"/>
    <property type="evidence" value="ECO:0000318"/>
    <property type="project" value="GO_Central"/>
</dbReference>
<dbReference type="GO" id="GO:0006433">
    <property type="term" value="P:prolyl-tRNA aminoacylation"/>
    <property type="evidence" value="ECO:0000318"/>
    <property type="project" value="GO_Central"/>
</dbReference>
<dbReference type="CDD" id="cd04334">
    <property type="entry name" value="ProRS-INS"/>
    <property type="match status" value="1"/>
</dbReference>
<dbReference type="CDD" id="cd00861">
    <property type="entry name" value="ProRS_anticodon_short"/>
    <property type="match status" value="1"/>
</dbReference>
<dbReference type="CDD" id="cd00779">
    <property type="entry name" value="ProRS_core_prok"/>
    <property type="match status" value="1"/>
</dbReference>
<dbReference type="FunFam" id="3.30.930.10:FF:000065">
    <property type="entry name" value="Proline--tRNA ligase"/>
    <property type="match status" value="1"/>
</dbReference>
<dbReference type="FunFam" id="3.30.930.10:FF:000150">
    <property type="entry name" value="Proline--tRNA ligase"/>
    <property type="match status" value="1"/>
</dbReference>
<dbReference type="Gene3D" id="3.40.50.800">
    <property type="entry name" value="Anticodon-binding domain"/>
    <property type="match status" value="1"/>
</dbReference>
<dbReference type="Gene3D" id="3.30.930.10">
    <property type="entry name" value="Bira Bifunctional Protein, Domain 2"/>
    <property type="match status" value="2"/>
</dbReference>
<dbReference type="HAMAP" id="MF_01569">
    <property type="entry name" value="Pro_tRNA_synth_type1"/>
    <property type="match status" value="1"/>
</dbReference>
<dbReference type="InterPro" id="IPR002314">
    <property type="entry name" value="aa-tRNA-synt_IIb"/>
</dbReference>
<dbReference type="InterPro" id="IPR006195">
    <property type="entry name" value="aa-tRNA-synth_II"/>
</dbReference>
<dbReference type="InterPro" id="IPR045864">
    <property type="entry name" value="aa-tRNA-synth_II/BPL/LPL"/>
</dbReference>
<dbReference type="InterPro" id="IPR004154">
    <property type="entry name" value="Anticodon-bd"/>
</dbReference>
<dbReference type="InterPro" id="IPR036621">
    <property type="entry name" value="Anticodon-bd_dom_sf"/>
</dbReference>
<dbReference type="InterPro" id="IPR002316">
    <property type="entry name" value="Pro-tRNA-ligase_IIa"/>
</dbReference>
<dbReference type="InterPro" id="IPR004500">
    <property type="entry name" value="Pro-tRNA-synth_IIa_bac-type"/>
</dbReference>
<dbReference type="InterPro" id="IPR023717">
    <property type="entry name" value="Pro-tRNA-Synthase_IIa_type1"/>
</dbReference>
<dbReference type="InterPro" id="IPR050062">
    <property type="entry name" value="Pro-tRNA_synthetase"/>
</dbReference>
<dbReference type="InterPro" id="IPR044140">
    <property type="entry name" value="ProRS_anticodon_short"/>
</dbReference>
<dbReference type="InterPro" id="IPR033730">
    <property type="entry name" value="ProRS_core_prok"/>
</dbReference>
<dbReference type="InterPro" id="IPR036754">
    <property type="entry name" value="YbaK/aa-tRNA-synt-asso_dom_sf"/>
</dbReference>
<dbReference type="InterPro" id="IPR007214">
    <property type="entry name" value="YbaK/aa-tRNA-synth-assoc-dom"/>
</dbReference>
<dbReference type="NCBIfam" id="NF006625">
    <property type="entry name" value="PRK09194.1"/>
    <property type="match status" value="1"/>
</dbReference>
<dbReference type="NCBIfam" id="TIGR00409">
    <property type="entry name" value="proS_fam_II"/>
    <property type="match status" value="1"/>
</dbReference>
<dbReference type="PANTHER" id="PTHR42753">
    <property type="entry name" value="MITOCHONDRIAL RIBOSOME PROTEIN L39/PROLYL-TRNA LIGASE FAMILY MEMBER"/>
    <property type="match status" value="1"/>
</dbReference>
<dbReference type="PANTHER" id="PTHR42753:SF2">
    <property type="entry name" value="PROLINE--TRNA LIGASE"/>
    <property type="match status" value="1"/>
</dbReference>
<dbReference type="Pfam" id="PF03129">
    <property type="entry name" value="HGTP_anticodon"/>
    <property type="match status" value="1"/>
</dbReference>
<dbReference type="Pfam" id="PF00587">
    <property type="entry name" value="tRNA-synt_2b"/>
    <property type="match status" value="1"/>
</dbReference>
<dbReference type="Pfam" id="PF04073">
    <property type="entry name" value="tRNA_edit"/>
    <property type="match status" value="1"/>
</dbReference>
<dbReference type="PRINTS" id="PR01046">
    <property type="entry name" value="TRNASYNTHPRO"/>
</dbReference>
<dbReference type="SUPFAM" id="SSF52954">
    <property type="entry name" value="Class II aaRS ABD-related"/>
    <property type="match status" value="1"/>
</dbReference>
<dbReference type="SUPFAM" id="SSF55681">
    <property type="entry name" value="Class II aaRS and biotin synthetases"/>
    <property type="match status" value="1"/>
</dbReference>
<dbReference type="SUPFAM" id="SSF55826">
    <property type="entry name" value="YbaK/ProRS associated domain"/>
    <property type="match status" value="1"/>
</dbReference>
<dbReference type="PROSITE" id="PS50862">
    <property type="entry name" value="AA_TRNA_LIGASE_II"/>
    <property type="match status" value="1"/>
</dbReference>
<protein>
    <recommendedName>
        <fullName evidence="1">Proline--tRNA ligase</fullName>
        <ecNumber evidence="1">6.1.1.15</ecNumber>
    </recommendedName>
    <alternativeName>
        <fullName evidence="1">Prolyl-tRNA synthetase</fullName>
        <shortName evidence="1">ProRS</shortName>
    </alternativeName>
</protein>
<reference key="1">
    <citation type="journal article" date="2003" name="Nature">
        <title>Unique physiological and pathogenic features of Leptospira interrogans revealed by whole-genome sequencing.</title>
        <authorList>
            <person name="Ren S.-X."/>
            <person name="Fu G."/>
            <person name="Jiang X.-G."/>
            <person name="Zeng R."/>
            <person name="Miao Y.-G."/>
            <person name="Xu H."/>
            <person name="Zhang Y.-X."/>
            <person name="Xiong H."/>
            <person name="Lu G."/>
            <person name="Lu L.-F."/>
            <person name="Jiang H.-Q."/>
            <person name="Jia J."/>
            <person name="Tu Y.-F."/>
            <person name="Jiang J.-X."/>
            <person name="Gu W.-Y."/>
            <person name="Zhang Y.-Q."/>
            <person name="Cai Z."/>
            <person name="Sheng H.-H."/>
            <person name="Yin H.-F."/>
            <person name="Zhang Y."/>
            <person name="Zhu G.-F."/>
            <person name="Wan M."/>
            <person name="Huang H.-L."/>
            <person name="Qian Z."/>
            <person name="Wang S.-Y."/>
            <person name="Ma W."/>
            <person name="Yao Z.-J."/>
            <person name="Shen Y."/>
            <person name="Qiang B.-Q."/>
            <person name="Xia Q.-C."/>
            <person name="Guo X.-K."/>
            <person name="Danchin A."/>
            <person name="Saint Girons I."/>
            <person name="Somerville R.L."/>
            <person name="Wen Y.-M."/>
            <person name="Shi M.-H."/>
            <person name="Chen Z."/>
            <person name="Xu J.-G."/>
            <person name="Zhao G.-P."/>
        </authorList>
    </citation>
    <scope>NUCLEOTIDE SEQUENCE [LARGE SCALE GENOMIC DNA]</scope>
    <source>
        <strain>56601</strain>
    </source>
</reference>
<gene>
    <name evidence="1" type="primary">proS</name>
    <name type="ordered locus">LA_3290</name>
</gene>
<feature type="chain" id="PRO_0000248716" description="Proline--tRNA ligase">
    <location>
        <begin position="1"/>
        <end position="576"/>
    </location>
</feature>
<organism>
    <name type="scientific">Leptospira interrogans serogroup Icterohaemorrhagiae serovar Lai (strain 56601)</name>
    <dbReference type="NCBI Taxonomy" id="189518"/>
    <lineage>
        <taxon>Bacteria</taxon>
        <taxon>Pseudomonadati</taxon>
        <taxon>Spirochaetota</taxon>
        <taxon>Spirochaetia</taxon>
        <taxon>Leptospirales</taxon>
        <taxon>Leptospiraceae</taxon>
        <taxon>Leptospira</taxon>
    </lineage>
</organism>
<sequence>MKASKYILPTEKENPADAVVASHRLMIRAGLVRKSSAGLYFYLPLGLKVLKKIEQIVREEMNSTGALEFDLPILTPSDFWEQSGRWSAMGKEMFRIQDRHDLSYALGPTHEESFSFLLKPLLKSYKDLPVNVYQIQTKFRDEIRPRFGVIRSREFIMKDAYSFHIDDSSLDDTYQAMRVAYRKIFDRCGLKTIPVQADSGSMGGSASEEFMVVSPIGEETLLLCNSCGYSSNSEKTPLILKKENSSAKFSEKKEISTPGKKTISEVSTLLGVSESETIKAVALKSEKKKILVFLRGDLELNLHKLHSLLKIADSEPMTDLEIRELGLIPGFISPIAPNDKIKVLYDRSLQKDFPYVVGSSKEDFHTQGFILEKEISGLPEFADVALAREGDLCPNCSFPLKAEKGIEVGHIFKLGDKYTKAFGIQVLDQNGKSKTLTMGCYGIGVNRTMATVIEQCNDEKGIFWPISIAPFEVSLVSIVKGEDQYFKIEEFYNVLMNEGIEVFWDDRDLGPGFKLKDSELIGFPIRITIGKKFFESGEISIYNRKKDQEDSFVFSGFDDLVARVESMRQELFTELR</sequence>
<evidence type="ECO:0000255" key="1">
    <source>
        <dbReference type="HAMAP-Rule" id="MF_01569"/>
    </source>
</evidence>